<comment type="similarity">
    <text evidence="1">Belongs to the UPF0134 family.</text>
</comment>
<evidence type="ECO:0000305" key="1"/>
<organism>
    <name type="scientific">Mycoplasma pneumoniae (strain ATCC 29342 / M129 / Subtype 1)</name>
    <name type="common">Mycoplasmoides pneumoniae</name>
    <dbReference type="NCBI Taxonomy" id="272634"/>
    <lineage>
        <taxon>Bacteria</taxon>
        <taxon>Bacillati</taxon>
        <taxon>Mycoplasmatota</taxon>
        <taxon>Mycoplasmoidales</taxon>
        <taxon>Mycoplasmoidaceae</taxon>
        <taxon>Mycoplasmoides</taxon>
    </lineage>
</organism>
<name>Y038_MYCPN</name>
<sequence length="116" mass="13629">MFKKRLNKDKINDCYTWEEELPDGSYDMGFHGNLNHMEKGKSGYVTHKQLDKKLEVFKQDLLVELSEKFVTKEEFRAQGKQIKELQIEQKAQGKTLQLILEALQGINKRLDKLESK</sequence>
<protein>
    <recommendedName>
        <fullName>UPF0134 protein MPN_038</fullName>
    </recommendedName>
</protein>
<feature type="chain" id="PRO_0000221592" description="UPF0134 protein MPN_038">
    <location>
        <begin position="1"/>
        <end position="116"/>
    </location>
</feature>
<reference key="1">
    <citation type="journal article" date="1996" name="Nucleic Acids Res.">
        <title>Complete sequence analysis of the genome of the bacterium Mycoplasma pneumoniae.</title>
        <authorList>
            <person name="Himmelreich R."/>
            <person name="Hilbert H."/>
            <person name="Plagens H."/>
            <person name="Pirkl E."/>
            <person name="Li B.-C."/>
            <person name="Herrmann R."/>
        </authorList>
    </citation>
    <scope>NUCLEOTIDE SEQUENCE [LARGE SCALE GENOMIC DNA]</scope>
    <source>
        <strain>ATCC 29342 / M129 / Subtype 1</strain>
    </source>
</reference>
<proteinExistence type="inferred from homology"/>
<dbReference type="EMBL" id="U00089">
    <property type="protein sequence ID" value="AAB95764.1"/>
    <property type="molecule type" value="Genomic_DNA"/>
</dbReference>
<dbReference type="PIR" id="S73442">
    <property type="entry name" value="S73442"/>
</dbReference>
<dbReference type="RefSeq" id="NP_109726.1">
    <property type="nucleotide sequence ID" value="NC_000912.1"/>
</dbReference>
<dbReference type="RefSeq" id="WP_010874395.1">
    <property type="nucleotide sequence ID" value="NZ_OU342337.1"/>
</dbReference>
<dbReference type="SMR" id="P75076"/>
<dbReference type="STRING" id="272634.MPN_038"/>
<dbReference type="EnsemblBacteria" id="AAB95764">
    <property type="protein sequence ID" value="AAB95764"/>
    <property type="gene ID" value="MPN_038"/>
</dbReference>
<dbReference type="KEGG" id="mpn:MPN_038"/>
<dbReference type="PATRIC" id="fig|272634.6.peg.37"/>
<dbReference type="HOGENOM" id="CLU_089620_0_0_14"/>
<dbReference type="BioCyc" id="MPNE272634:G1GJ3-55-MONOMER"/>
<dbReference type="Proteomes" id="UP000000808">
    <property type="component" value="Chromosome"/>
</dbReference>
<dbReference type="Gene3D" id="6.10.250.40">
    <property type="match status" value="1"/>
</dbReference>
<dbReference type="InterPro" id="IPR002862">
    <property type="entry name" value="DUF16"/>
</dbReference>
<dbReference type="Pfam" id="PF01519">
    <property type="entry name" value="DUF16"/>
    <property type="match status" value="1"/>
</dbReference>
<dbReference type="SUPFAM" id="SSF144266">
    <property type="entry name" value="MPN010-like"/>
    <property type="match status" value="1"/>
</dbReference>
<accession>P75076</accession>
<gene>
    <name type="ordered locus">MPN_038</name>
    <name type="ORF">B01_orf116L</name>
    <name type="ORF">MP116</name>
</gene>
<keyword id="KW-1185">Reference proteome</keyword>